<reference key="1">
    <citation type="journal article" date="2002" name="J. Cell Biol.">
        <title>Scotin, a novel p53-inducible proapoptotic protein located in the ER and the nuclear membrane.</title>
        <authorList>
            <person name="Bourdon J.-C."/>
            <person name="Renzing J."/>
            <person name="Robertson P.L."/>
            <person name="Fernandes K.N."/>
            <person name="Lane D.P."/>
        </authorList>
    </citation>
    <scope>NUCLEOTIDE SEQUENCE [GENOMIC DNA / MRNA] (ISOFORM 1)</scope>
    <scope>FUNCTION</scope>
    <scope>INDUCTION</scope>
    <scope>DOMAIN</scope>
    <scope>SUBCELLULAR LOCATION</scope>
    <source>
        <strain>129/Sv</strain>
        <strain>ICR X Swiss Webster</strain>
        <tissue>Thymus</tissue>
    </source>
</reference>
<reference key="2">
    <citation type="journal article" date="2005" name="Science">
        <title>The transcriptional landscape of the mammalian genome.</title>
        <authorList>
            <person name="Carninci P."/>
            <person name="Kasukawa T."/>
            <person name="Katayama S."/>
            <person name="Gough J."/>
            <person name="Frith M.C."/>
            <person name="Maeda N."/>
            <person name="Oyama R."/>
            <person name="Ravasi T."/>
            <person name="Lenhard B."/>
            <person name="Wells C."/>
            <person name="Kodzius R."/>
            <person name="Shimokawa K."/>
            <person name="Bajic V.B."/>
            <person name="Brenner S.E."/>
            <person name="Batalov S."/>
            <person name="Forrest A.R."/>
            <person name="Zavolan M."/>
            <person name="Davis M.J."/>
            <person name="Wilming L.G."/>
            <person name="Aidinis V."/>
            <person name="Allen J.E."/>
            <person name="Ambesi-Impiombato A."/>
            <person name="Apweiler R."/>
            <person name="Aturaliya R.N."/>
            <person name="Bailey T.L."/>
            <person name="Bansal M."/>
            <person name="Baxter L."/>
            <person name="Beisel K.W."/>
            <person name="Bersano T."/>
            <person name="Bono H."/>
            <person name="Chalk A.M."/>
            <person name="Chiu K.P."/>
            <person name="Choudhary V."/>
            <person name="Christoffels A."/>
            <person name="Clutterbuck D.R."/>
            <person name="Crowe M.L."/>
            <person name="Dalla E."/>
            <person name="Dalrymple B.P."/>
            <person name="de Bono B."/>
            <person name="Della Gatta G."/>
            <person name="di Bernardo D."/>
            <person name="Down T."/>
            <person name="Engstrom P."/>
            <person name="Fagiolini M."/>
            <person name="Faulkner G."/>
            <person name="Fletcher C.F."/>
            <person name="Fukushima T."/>
            <person name="Furuno M."/>
            <person name="Futaki S."/>
            <person name="Gariboldi M."/>
            <person name="Georgii-Hemming P."/>
            <person name="Gingeras T.R."/>
            <person name="Gojobori T."/>
            <person name="Green R.E."/>
            <person name="Gustincich S."/>
            <person name="Harbers M."/>
            <person name="Hayashi Y."/>
            <person name="Hensch T.K."/>
            <person name="Hirokawa N."/>
            <person name="Hill D."/>
            <person name="Huminiecki L."/>
            <person name="Iacono M."/>
            <person name="Ikeo K."/>
            <person name="Iwama A."/>
            <person name="Ishikawa T."/>
            <person name="Jakt M."/>
            <person name="Kanapin A."/>
            <person name="Katoh M."/>
            <person name="Kawasawa Y."/>
            <person name="Kelso J."/>
            <person name="Kitamura H."/>
            <person name="Kitano H."/>
            <person name="Kollias G."/>
            <person name="Krishnan S.P."/>
            <person name="Kruger A."/>
            <person name="Kummerfeld S.K."/>
            <person name="Kurochkin I.V."/>
            <person name="Lareau L.F."/>
            <person name="Lazarevic D."/>
            <person name="Lipovich L."/>
            <person name="Liu J."/>
            <person name="Liuni S."/>
            <person name="McWilliam S."/>
            <person name="Madan Babu M."/>
            <person name="Madera M."/>
            <person name="Marchionni L."/>
            <person name="Matsuda H."/>
            <person name="Matsuzawa S."/>
            <person name="Miki H."/>
            <person name="Mignone F."/>
            <person name="Miyake S."/>
            <person name="Morris K."/>
            <person name="Mottagui-Tabar S."/>
            <person name="Mulder N."/>
            <person name="Nakano N."/>
            <person name="Nakauchi H."/>
            <person name="Ng P."/>
            <person name="Nilsson R."/>
            <person name="Nishiguchi S."/>
            <person name="Nishikawa S."/>
            <person name="Nori F."/>
            <person name="Ohara O."/>
            <person name="Okazaki Y."/>
            <person name="Orlando V."/>
            <person name="Pang K.C."/>
            <person name="Pavan W.J."/>
            <person name="Pavesi G."/>
            <person name="Pesole G."/>
            <person name="Petrovsky N."/>
            <person name="Piazza S."/>
            <person name="Reed J."/>
            <person name="Reid J.F."/>
            <person name="Ring B.Z."/>
            <person name="Ringwald M."/>
            <person name="Rost B."/>
            <person name="Ruan Y."/>
            <person name="Salzberg S.L."/>
            <person name="Sandelin A."/>
            <person name="Schneider C."/>
            <person name="Schoenbach C."/>
            <person name="Sekiguchi K."/>
            <person name="Semple C.A."/>
            <person name="Seno S."/>
            <person name="Sessa L."/>
            <person name="Sheng Y."/>
            <person name="Shibata Y."/>
            <person name="Shimada H."/>
            <person name="Shimada K."/>
            <person name="Silva D."/>
            <person name="Sinclair B."/>
            <person name="Sperling S."/>
            <person name="Stupka E."/>
            <person name="Sugiura K."/>
            <person name="Sultana R."/>
            <person name="Takenaka Y."/>
            <person name="Taki K."/>
            <person name="Tammoja K."/>
            <person name="Tan S.L."/>
            <person name="Tang S."/>
            <person name="Taylor M.S."/>
            <person name="Tegner J."/>
            <person name="Teichmann S.A."/>
            <person name="Ueda H.R."/>
            <person name="van Nimwegen E."/>
            <person name="Verardo R."/>
            <person name="Wei C.L."/>
            <person name="Yagi K."/>
            <person name="Yamanishi H."/>
            <person name="Zabarovsky E."/>
            <person name="Zhu S."/>
            <person name="Zimmer A."/>
            <person name="Hide W."/>
            <person name="Bult C."/>
            <person name="Grimmond S.M."/>
            <person name="Teasdale R.D."/>
            <person name="Liu E.T."/>
            <person name="Brusic V."/>
            <person name="Quackenbush J."/>
            <person name="Wahlestedt C."/>
            <person name="Mattick J.S."/>
            <person name="Hume D.A."/>
            <person name="Kai C."/>
            <person name="Sasaki D."/>
            <person name="Tomaru Y."/>
            <person name="Fukuda S."/>
            <person name="Kanamori-Katayama M."/>
            <person name="Suzuki M."/>
            <person name="Aoki J."/>
            <person name="Arakawa T."/>
            <person name="Iida J."/>
            <person name="Imamura K."/>
            <person name="Itoh M."/>
            <person name="Kato T."/>
            <person name="Kawaji H."/>
            <person name="Kawagashira N."/>
            <person name="Kawashima T."/>
            <person name="Kojima M."/>
            <person name="Kondo S."/>
            <person name="Konno H."/>
            <person name="Nakano K."/>
            <person name="Ninomiya N."/>
            <person name="Nishio T."/>
            <person name="Okada M."/>
            <person name="Plessy C."/>
            <person name="Shibata K."/>
            <person name="Shiraki T."/>
            <person name="Suzuki S."/>
            <person name="Tagami M."/>
            <person name="Waki K."/>
            <person name="Watahiki A."/>
            <person name="Okamura-Oho Y."/>
            <person name="Suzuki H."/>
            <person name="Kawai J."/>
            <person name="Hayashizaki Y."/>
        </authorList>
    </citation>
    <scope>NUCLEOTIDE SEQUENCE [LARGE SCALE MRNA] (ISOFORMS 1; 3 AND 4)</scope>
    <source>
        <strain>C57BL/6J</strain>
        <tissue>Colon</tissue>
        <tissue>Corpora quadrigemina</tissue>
        <tissue>Olfactory bulb</tissue>
        <tissue>Retina</tissue>
        <tissue>Tongue</tissue>
    </source>
</reference>
<reference key="3">
    <citation type="journal article" date="2004" name="Genome Res.">
        <title>The status, quality, and expansion of the NIH full-length cDNA project: the Mammalian Gene Collection (MGC).</title>
        <authorList>
            <consortium name="The MGC Project Team"/>
        </authorList>
    </citation>
    <scope>NUCLEOTIDE SEQUENCE [LARGE SCALE MRNA] (ISOFORMS 2 AND 3)</scope>
    <source>
        <strain>C57BL/6J</strain>
        <strain>FVB/N</strain>
        <tissue>Brain</tissue>
        <tissue>Mammary tumor</tissue>
    </source>
</reference>
<reference key="4">
    <citation type="journal article" date="2007" name="Arch. Biochem. Biophys.">
        <title>The calcium binding protein ALG-2 binds and stabilizes Scotin, a p53-inducible gene product localized at the endoplasmic reticulum membrane.</title>
        <authorList>
            <person name="Draeby I."/>
            <person name="Woods Y.L."/>
            <person name="la Cour J.M."/>
            <person name="Mollerup J."/>
            <person name="Bourdon J.C."/>
            <person name="Berchtold M.W."/>
        </authorList>
    </citation>
    <scope>INTERACTION WITH PDCD6</scope>
</reference>
<feature type="signal peptide" evidence="1">
    <location>
        <begin position="1"/>
        <end position="26"/>
    </location>
</feature>
<feature type="chain" id="PRO_0000312879" description="Protein shisa-5">
    <location>
        <begin position="27"/>
        <end position="235"/>
    </location>
</feature>
<feature type="topological domain" description="Extracellular" evidence="1">
    <location>
        <begin position="27"/>
        <end position="105"/>
    </location>
</feature>
<feature type="transmembrane region" description="Helical" evidence="1">
    <location>
        <begin position="106"/>
        <end position="126"/>
    </location>
</feature>
<feature type="topological domain" description="Cytoplasmic" evidence="1">
    <location>
        <begin position="127"/>
        <end position="235"/>
    </location>
</feature>
<feature type="region of interest" description="Disordered" evidence="2">
    <location>
        <begin position="157"/>
        <end position="235"/>
    </location>
</feature>
<feature type="compositionally biased region" description="Pro residues" evidence="2">
    <location>
        <begin position="159"/>
        <end position="172"/>
    </location>
</feature>
<feature type="compositionally biased region" description="Pro residues" evidence="2">
    <location>
        <begin position="181"/>
        <end position="211"/>
    </location>
</feature>
<feature type="splice variant" id="VSP_029957" description="In isoform 3." evidence="5 6">
    <location>
        <begin position="1"/>
        <end position="103"/>
    </location>
</feature>
<feature type="splice variant" id="VSP_029958" description="In isoform 4." evidence="6">
    <location>
        <begin position="1"/>
        <end position="64"/>
    </location>
</feature>
<feature type="splice variant" id="VSP_029959" description="In isoform 4." evidence="6">
    <original>WNEEMCPEPE</original>
    <variation>MFLMRFLFSV</variation>
    <location>
        <begin position="65"/>
        <end position="74"/>
    </location>
</feature>
<feature type="splice variant" id="VSP_029960" description="In isoform 2." evidence="5">
    <original>E</original>
    <variation>ES</variation>
    <location>
        <position position="74"/>
    </location>
</feature>
<feature type="splice variant" id="VSP_029961" description="In isoform 3." evidence="5 6">
    <original>S</original>
    <variation>M</variation>
    <location>
        <position position="104"/>
    </location>
</feature>
<feature type="sequence conflict" description="In Ref. 2; BAC41188." evidence="7" ref="2">
    <original>E</original>
    <variation>G</variation>
    <location>
        <position position="68"/>
    </location>
</feature>
<feature type="sequence conflict" description="In Ref. 2; BAC41188." evidence="7" ref="2">
    <original>P</original>
    <variation>H</variation>
    <location>
        <position position="85"/>
    </location>
</feature>
<feature type="sequence conflict" description="In Ref. 2; BAC41183." evidence="7" ref="2">
    <original>A</original>
    <variation>S</variation>
    <location>
        <position position="218"/>
    </location>
</feature>
<name>SHSA5_MOUSE</name>
<accession>Q9D7I0</accession>
<accession>Q8BJ86</accession>
<accession>Q8BJ87</accession>
<accession>Q8BLE9</accession>
<accession>Q8K4W3</accession>
<accession>Q91Z37</accession>
<accession>Q9CQP5</accession>
<keyword id="KW-0025">Alternative splicing</keyword>
<keyword id="KW-0053">Apoptosis</keyword>
<keyword id="KW-0256">Endoplasmic reticulum</keyword>
<keyword id="KW-0472">Membrane</keyword>
<keyword id="KW-0539">Nucleus</keyword>
<keyword id="KW-1185">Reference proteome</keyword>
<keyword id="KW-0732">Signal</keyword>
<keyword id="KW-0812">Transmembrane</keyword>
<keyword id="KW-1133">Transmembrane helix</keyword>
<gene>
    <name type="primary">Shisa5</name>
    <name type="synonym">Scotin</name>
</gene>
<proteinExistence type="evidence at protein level"/>
<sequence>MAAPAPSLWTLLLLLLLLPPPPGAHGELCRPFGEDNSIPVFCPDFCCGSCSNQYCCSDVLRKIQWNEEMCPEPESRFSTPAEETPEHLGSALKFRSSFDSDPMSGFGATVAIGVTIFVVFIATIIICFTCSCCCLYKMCCPQRPVVTNTTTTTVVHAPYPQPQPQPVAPSYPGPTYQGYHPMPPQPGMPAAPYPTQYPPPYLAQPTGPPPYHESLAGASQPPYNPTYMDSLKTIP</sequence>
<dbReference type="EMBL" id="AF520699">
    <property type="protein sequence ID" value="AAM74233.1"/>
    <property type="molecule type" value="mRNA"/>
</dbReference>
<dbReference type="EMBL" id="AH011687">
    <property type="protein sequence ID" value="AAM74234.1"/>
    <property type="molecule type" value="Genomic_DNA"/>
</dbReference>
<dbReference type="EMBL" id="AK009225">
    <property type="protein sequence ID" value="BAB26148.1"/>
    <property type="molecule type" value="mRNA"/>
</dbReference>
<dbReference type="EMBL" id="AK018291">
    <property type="protein sequence ID" value="BAB31149.1"/>
    <property type="molecule type" value="mRNA"/>
</dbReference>
<dbReference type="EMBL" id="AK020877">
    <property type="protein sequence ID" value="BAB32237.1"/>
    <property type="molecule type" value="mRNA"/>
</dbReference>
<dbReference type="EMBL" id="AK033545">
    <property type="protein sequence ID" value="BAC28350.1"/>
    <property type="molecule type" value="mRNA"/>
</dbReference>
<dbReference type="EMBL" id="AK045368">
    <property type="protein sequence ID" value="BAC32331.1"/>
    <property type="status" value="ALT_SEQ"/>
    <property type="molecule type" value="mRNA"/>
</dbReference>
<dbReference type="EMBL" id="AK081060">
    <property type="protein sequence ID" value="BAC38125.1"/>
    <property type="molecule type" value="mRNA"/>
</dbReference>
<dbReference type="EMBL" id="AK090357">
    <property type="protein sequence ID" value="BAC41183.1"/>
    <property type="molecule type" value="mRNA"/>
</dbReference>
<dbReference type="EMBL" id="AK090373">
    <property type="protein sequence ID" value="BAC41188.1"/>
    <property type="molecule type" value="mRNA"/>
</dbReference>
<dbReference type="EMBL" id="BC010238">
    <property type="protein sequence ID" value="AAH10238.1"/>
    <property type="molecule type" value="mRNA"/>
</dbReference>
<dbReference type="EMBL" id="BC017600">
    <property type="protein sequence ID" value="AAH17600.1"/>
    <property type="molecule type" value="mRNA"/>
</dbReference>
<dbReference type="EMBL" id="BC057089">
    <property type="protein sequence ID" value="AAH57089.1"/>
    <property type="molecule type" value="mRNA"/>
</dbReference>
<dbReference type="CCDS" id="CCDS23543.1">
    <molecule id="Q9D7I0-1"/>
</dbReference>
<dbReference type="CCDS" id="CCDS40771.1">
    <molecule id="Q9D7I0-3"/>
</dbReference>
<dbReference type="CCDS" id="CCDS72309.1">
    <molecule id="Q9D7I0-2"/>
</dbReference>
<dbReference type="CCDS" id="CCDS90666.1">
    <molecule id="Q9D7I0-5"/>
</dbReference>
<dbReference type="RefSeq" id="NP_001271261.1">
    <molecule id="Q9D7I0-2"/>
    <property type="nucleotide sequence ID" value="NM_001284332.1"/>
</dbReference>
<dbReference type="RefSeq" id="NP_001344862.1">
    <molecule id="Q9D7I0-5"/>
    <property type="nucleotide sequence ID" value="NM_001357933.1"/>
</dbReference>
<dbReference type="RefSeq" id="NP_080134.1">
    <molecule id="Q9D7I0-1"/>
    <property type="nucleotide sequence ID" value="NM_025858.3"/>
</dbReference>
<dbReference type="RefSeq" id="NP_080657.1">
    <molecule id="Q9D7I0-3"/>
    <property type="nucleotide sequence ID" value="NM_026381.5"/>
</dbReference>
<dbReference type="SMR" id="Q9D7I0"/>
<dbReference type="FunCoup" id="Q9D7I0">
    <property type="interactions" value="524"/>
</dbReference>
<dbReference type="IntAct" id="Q9D7I0">
    <property type="interactions" value="1"/>
</dbReference>
<dbReference type="STRING" id="10090.ENSMUSP00000107690"/>
<dbReference type="iPTMnet" id="Q9D7I0"/>
<dbReference type="PhosphoSitePlus" id="Q9D7I0"/>
<dbReference type="PaxDb" id="10090-ENSMUSP00000107690"/>
<dbReference type="PeptideAtlas" id="Q9D7I0"/>
<dbReference type="Antibodypedia" id="30112">
    <property type="antibodies" value="119 antibodies from 17 providers"/>
</dbReference>
<dbReference type="DNASU" id="66940"/>
<dbReference type="Ensembl" id="ENSMUST00000026737.12">
    <molecule id="Q9D7I0-1"/>
    <property type="protein sequence ID" value="ENSMUSP00000026737.8"/>
    <property type="gene ID" value="ENSMUSG00000025647.17"/>
</dbReference>
<dbReference type="Ensembl" id="ENSMUST00000112059.10">
    <molecule id="Q9D7I0-2"/>
    <property type="protein sequence ID" value="ENSMUSP00000107690.6"/>
    <property type="gene ID" value="ENSMUSG00000025647.17"/>
</dbReference>
<dbReference type="Ensembl" id="ENSMUST00000154184.5">
    <molecule id="Q9D7I0-3"/>
    <property type="protein sequence ID" value="ENSMUSP00000128901.2"/>
    <property type="gene ID" value="ENSMUSG00000025647.17"/>
</dbReference>
<dbReference type="Ensembl" id="ENSMUST00000200515.5">
    <molecule id="Q9D7I0-5"/>
    <property type="protein sequence ID" value="ENSMUSP00000142835.2"/>
    <property type="gene ID" value="ENSMUSG00000025647.17"/>
</dbReference>
<dbReference type="GeneID" id="66940"/>
<dbReference type="KEGG" id="mmu:66940"/>
<dbReference type="UCSC" id="uc009rrm.2">
    <molecule id="Q9D7I0-1"/>
    <property type="organism name" value="mouse"/>
</dbReference>
<dbReference type="UCSC" id="uc009rrn.2">
    <molecule id="Q9D7I0-2"/>
    <property type="organism name" value="mouse"/>
</dbReference>
<dbReference type="UCSC" id="uc009rro.2">
    <molecule id="Q9D7I0-5"/>
    <property type="organism name" value="mouse"/>
</dbReference>
<dbReference type="UCSC" id="uc009rrq.2">
    <molecule id="Q9D7I0-3"/>
    <property type="organism name" value="mouse"/>
</dbReference>
<dbReference type="AGR" id="MGI:1915044"/>
<dbReference type="CTD" id="51246"/>
<dbReference type="MGI" id="MGI:1915044">
    <property type="gene designation" value="Shisa5"/>
</dbReference>
<dbReference type="VEuPathDB" id="HostDB:ENSMUSG00000025647"/>
<dbReference type="eggNOG" id="ENOG502S2Y4">
    <property type="taxonomic scope" value="Eukaryota"/>
</dbReference>
<dbReference type="GeneTree" id="ENSGT00390000008296"/>
<dbReference type="InParanoid" id="Q9D7I0"/>
<dbReference type="OMA" id="CCCLYRM"/>
<dbReference type="OrthoDB" id="92105at9989"/>
<dbReference type="PhylomeDB" id="Q9D7I0"/>
<dbReference type="TreeFam" id="TF332572"/>
<dbReference type="Reactome" id="R-MMU-381426">
    <property type="pathway name" value="Regulation of Insulin-like Growth Factor (IGF) transport and uptake by Insulin-like Growth Factor Binding Proteins (IGFBPs)"/>
</dbReference>
<dbReference type="Reactome" id="R-MMU-8957275">
    <property type="pathway name" value="Post-translational protein phosphorylation"/>
</dbReference>
<dbReference type="BioGRID-ORCS" id="66940">
    <property type="hits" value="3 hits in 75 CRISPR screens"/>
</dbReference>
<dbReference type="PRO" id="PR:Q9D7I0"/>
<dbReference type="Proteomes" id="UP000000589">
    <property type="component" value="Chromosome 9"/>
</dbReference>
<dbReference type="RNAct" id="Q9D7I0">
    <property type="molecule type" value="protein"/>
</dbReference>
<dbReference type="Bgee" id="ENSMUSG00000025647">
    <property type="expression patterns" value="Expressed in peripheral lymph node and 270 other cell types or tissues"/>
</dbReference>
<dbReference type="ExpressionAtlas" id="Q9D7I0">
    <property type="expression patterns" value="baseline and differential"/>
</dbReference>
<dbReference type="GO" id="GO:0005783">
    <property type="term" value="C:endoplasmic reticulum"/>
    <property type="evidence" value="ECO:0000314"/>
    <property type="project" value="MGI"/>
</dbReference>
<dbReference type="GO" id="GO:0005789">
    <property type="term" value="C:endoplasmic reticulum membrane"/>
    <property type="evidence" value="ECO:0007669"/>
    <property type="project" value="UniProtKB-SubCell"/>
</dbReference>
<dbReference type="GO" id="GO:0005635">
    <property type="term" value="C:nuclear envelope"/>
    <property type="evidence" value="ECO:0000314"/>
    <property type="project" value="MGI"/>
</dbReference>
<dbReference type="GO" id="GO:0031965">
    <property type="term" value="C:nuclear membrane"/>
    <property type="evidence" value="ECO:0007669"/>
    <property type="project" value="UniProtKB-SubCell"/>
</dbReference>
<dbReference type="GO" id="GO:0072332">
    <property type="term" value="P:intrinsic apoptotic signaling pathway by p53 class mediator"/>
    <property type="evidence" value="ECO:0000315"/>
    <property type="project" value="MGI"/>
</dbReference>
<dbReference type="GO" id="GO:0042771">
    <property type="term" value="P:intrinsic apoptotic signaling pathway in response to DNA damage by p53 class mediator"/>
    <property type="evidence" value="ECO:0000314"/>
    <property type="project" value="MGI"/>
</dbReference>
<dbReference type="InterPro" id="IPR026910">
    <property type="entry name" value="Shisa"/>
</dbReference>
<dbReference type="InterPro" id="IPR053891">
    <property type="entry name" value="Shisa_N"/>
</dbReference>
<dbReference type="PANTHER" id="PTHR31395:SF14">
    <property type="entry name" value="PROTEIN SHISA-5"/>
    <property type="match status" value="1"/>
</dbReference>
<dbReference type="PANTHER" id="PTHR31395">
    <property type="entry name" value="SHISA"/>
    <property type="match status" value="1"/>
</dbReference>
<dbReference type="Pfam" id="PF13908">
    <property type="entry name" value="Shisa_N"/>
    <property type="match status" value="1"/>
</dbReference>
<organism>
    <name type="scientific">Mus musculus</name>
    <name type="common">Mouse</name>
    <dbReference type="NCBI Taxonomy" id="10090"/>
    <lineage>
        <taxon>Eukaryota</taxon>
        <taxon>Metazoa</taxon>
        <taxon>Chordata</taxon>
        <taxon>Craniata</taxon>
        <taxon>Vertebrata</taxon>
        <taxon>Euteleostomi</taxon>
        <taxon>Mammalia</taxon>
        <taxon>Eutheria</taxon>
        <taxon>Euarchontoglires</taxon>
        <taxon>Glires</taxon>
        <taxon>Rodentia</taxon>
        <taxon>Myomorpha</taxon>
        <taxon>Muroidea</taxon>
        <taxon>Muridae</taxon>
        <taxon>Murinae</taxon>
        <taxon>Mus</taxon>
        <taxon>Mus</taxon>
    </lineage>
</organism>
<protein>
    <recommendedName>
        <fullName>Protein shisa-5</fullName>
    </recommendedName>
    <alternativeName>
        <fullName>Scotin</fullName>
    </alternativeName>
</protein>
<comment type="function">
    <text evidence="3">Can induce apoptosis in a caspase-dependent manner and plays a role in p53/TP53-dependent apoptosis.</text>
</comment>
<comment type="subunit">
    <text evidence="4">Interacts with PDCD6; PDCD6 can stabilize SHISA5.</text>
</comment>
<comment type="subcellular location">
    <subcellularLocation>
        <location evidence="3">Endoplasmic reticulum membrane</location>
        <topology evidence="3">Single-pass type I membrane protein</topology>
    </subcellularLocation>
    <subcellularLocation>
        <location evidence="3">Nucleus membrane</location>
    </subcellularLocation>
</comment>
<comment type="alternative products">
    <event type="alternative splicing"/>
    <isoform>
        <id>Q9D7I0-1</id>
        <name>1</name>
        <sequence type="displayed"/>
    </isoform>
    <isoform>
        <id>Q9D7I0-2</id>
        <name>2</name>
        <sequence type="described" ref="VSP_029960"/>
    </isoform>
    <isoform>
        <id>Q9D7I0-3</id>
        <name>3</name>
        <sequence type="described" ref="VSP_029957 VSP_029961"/>
    </isoform>
    <isoform>
        <id>Q9D7I0-5</id>
        <name>4</name>
        <sequence type="described" ref="VSP_029958 VSP_029959"/>
    </isoform>
</comment>
<comment type="tissue specificity">
    <text>Spleen and thymus.</text>
</comment>
<comment type="induction">
    <text evidence="3">Induced in a p53/TP53-dependent manner in response to cellular stress.</text>
</comment>
<comment type="domain">
    <text evidence="3">The proline-rich region is required for endoplasmic reticulum localization.</text>
</comment>
<comment type="similarity">
    <text evidence="7">Belongs to the shisa family.</text>
</comment>
<comment type="sequence caution" evidence="7">
    <conflict type="miscellaneous discrepancy">
        <sequence resource="EMBL-CDS" id="BAC32331"/>
    </conflict>
    <text>Probable cloning artifact.</text>
</comment>
<evidence type="ECO:0000255" key="1"/>
<evidence type="ECO:0000256" key="2">
    <source>
        <dbReference type="SAM" id="MobiDB-lite"/>
    </source>
</evidence>
<evidence type="ECO:0000269" key="3">
    <source>
    </source>
</evidence>
<evidence type="ECO:0000269" key="4">
    <source>
    </source>
</evidence>
<evidence type="ECO:0000303" key="5">
    <source>
    </source>
</evidence>
<evidence type="ECO:0000303" key="6">
    <source>
    </source>
</evidence>
<evidence type="ECO:0000305" key="7"/>